<keyword id="KW-0002">3D-structure</keyword>
<keyword id="KW-0067">ATP-binding</keyword>
<keyword id="KW-0436">Ligase</keyword>
<keyword id="KW-0547">Nucleotide-binding</keyword>
<keyword id="KW-0648">Protein biosynthesis</keyword>
<keyword id="KW-1185">Reference proteome</keyword>
<reference key="1">
    <citation type="journal article" date="1997" name="J. Bacteriol.">
        <title>Complete genome sequence of Methanobacterium thermoautotrophicum deltaH: functional analysis and comparative genomics.</title>
        <authorList>
            <person name="Smith D.R."/>
            <person name="Doucette-Stamm L.A."/>
            <person name="Deloughery C."/>
            <person name="Lee H.-M."/>
            <person name="Dubois J."/>
            <person name="Aldredge T."/>
            <person name="Bashirzadeh R."/>
            <person name="Blakely D."/>
            <person name="Cook R."/>
            <person name="Gilbert K."/>
            <person name="Harrison D."/>
            <person name="Hoang L."/>
            <person name="Keagle P."/>
            <person name="Lumm W."/>
            <person name="Pothier B."/>
            <person name="Qiu D."/>
            <person name="Spadafora R."/>
            <person name="Vicare R."/>
            <person name="Wang Y."/>
            <person name="Wierzbowski J."/>
            <person name="Gibson R."/>
            <person name="Jiwani N."/>
            <person name="Caruso A."/>
            <person name="Bush D."/>
            <person name="Safer H."/>
            <person name="Patwell D."/>
            <person name="Prabhakar S."/>
            <person name="McDougall S."/>
            <person name="Shimer G."/>
            <person name="Goyal A."/>
            <person name="Pietrovski S."/>
            <person name="Church G.M."/>
            <person name="Daniels C.J."/>
            <person name="Mao J.-I."/>
            <person name="Rice P."/>
            <person name="Noelling J."/>
            <person name="Reeve J.N."/>
        </authorList>
    </citation>
    <scope>NUCLEOTIDE SEQUENCE [LARGE SCALE GENOMIC DNA]</scope>
    <source>
        <strain>ATCC 29096 / DSM 1053 / JCM 10044 / NBRC 100330 / Delta H</strain>
    </source>
</reference>
<reference key="2">
    <citation type="journal article" date="2000" name="Nature">
        <title>Domain-specific recruitment of amide amino acids for protein synthesis.</title>
        <authorList>
            <person name="Tumbula D.L."/>
            <person name="Becker H.D."/>
            <person name="Chang W.-Z."/>
            <person name="Soell D."/>
        </authorList>
    </citation>
    <scope>CHARACTERIZATION</scope>
    <source>
        <strain>ATCC 29096 / DSM 1053 / JCM 10044 / NBRC 100330 / Delta H</strain>
    </source>
</reference>
<evidence type="ECO:0000305" key="1"/>
<evidence type="ECO:0007829" key="2">
    <source>
        <dbReference type="PDB" id="2D6F"/>
    </source>
</evidence>
<protein>
    <recommendedName>
        <fullName>Glutamyl-tRNA(Gln) amidotransferase subunit E</fullName>
        <shortName>Glu-ADT subunit E</shortName>
        <ecNumber>6.3.5.-</ecNumber>
    </recommendedName>
</protein>
<proteinExistence type="evidence at protein level"/>
<name>GATE_METTH</name>
<organism>
    <name type="scientific">Methanothermobacter thermautotrophicus (strain ATCC 29096 / DSM 1053 / JCM 10044 / NBRC 100330 / Delta H)</name>
    <name type="common">Methanobacterium thermoautotrophicum</name>
    <dbReference type="NCBI Taxonomy" id="187420"/>
    <lineage>
        <taxon>Archaea</taxon>
        <taxon>Methanobacteriati</taxon>
        <taxon>Methanobacteriota</taxon>
        <taxon>Methanomada group</taxon>
        <taxon>Methanobacteria</taxon>
        <taxon>Methanobacteriales</taxon>
        <taxon>Methanobacteriaceae</taxon>
        <taxon>Methanothermobacter</taxon>
    </lineage>
</organism>
<sequence length="619" mass="69533">MDWEKVGLKMGLEIHQQLDTESKLFCPCRTELTDSEPDHDIVRNLRPTQSELGKFDRAAFEEAMRKLHFHYENYHEETCLVEADEEPPHPLNPEALEIAVTIALLLNMRVVDEFHTMRKQVIDGSNTGGFQRTGLVATDGHLETPQGTVKIENLCLEEDAARRIRETGDGVVFRLDRLGIPLVEITTDPSMSDPQQLREVAYQIGQILRSTRVKRGLGTIRQDLNISIRDGARVEVKGVQDLDLIPEIVEREVKRQLSLVEIRDTLQERGAVVEDKIFDVSEVFADTESRIISSAESVLAVKLRGFDGLIGVEIQPGRRLGTEMADYAKKRGVSGIFHTDELPAYGITEEEVRGLRDAVGASQGDAVVMVAHERVTAENALREVIRRAEMAIQGVPEETRKALPDGNTQYLRPLPTSSRMYLETDIPLFRIEDDLLEGIRRNLPELPSEKKERIMRDYGLSEDLASQLVKRNLVDEFEALTEFRVDTTVIASLLAYTLRELRREGHDVDGLGLDELRDAIKLLEVGKISKDALRDIVACMADEGLAAEDAARKLNLLLLAEDEIESIIQEIVEGNLDMISERGMGAMGPLMGQAMGRLRGRADGKVVNRILREKIQERL</sequence>
<accession>O26803</accession>
<dbReference type="EC" id="6.3.5.-"/>
<dbReference type="EMBL" id="AE000666">
    <property type="protein sequence ID" value="AAB85212.1"/>
    <property type="molecule type" value="Genomic_DNA"/>
</dbReference>
<dbReference type="PIR" id="D69194">
    <property type="entry name" value="D69194"/>
</dbReference>
<dbReference type="RefSeq" id="WP_010876346.1">
    <property type="nucleotide sequence ID" value="NC_000916.1"/>
</dbReference>
<dbReference type="PDB" id="2D6F">
    <property type="method" value="X-ray"/>
    <property type="resolution" value="3.15 A"/>
    <property type="chains" value="C/D=1-619"/>
</dbReference>
<dbReference type="PDBsum" id="2D6F"/>
<dbReference type="SMR" id="O26803"/>
<dbReference type="FunCoup" id="O26803">
    <property type="interactions" value="25"/>
</dbReference>
<dbReference type="STRING" id="187420.MTH_707"/>
<dbReference type="PaxDb" id="187420-MTH_707"/>
<dbReference type="EnsemblBacteria" id="AAB85212">
    <property type="protein sequence ID" value="AAB85212"/>
    <property type="gene ID" value="MTH_707"/>
</dbReference>
<dbReference type="GeneID" id="82297165"/>
<dbReference type="KEGG" id="mth:MTH_707"/>
<dbReference type="PATRIC" id="fig|187420.15.peg.690"/>
<dbReference type="HOGENOM" id="CLU_030702_0_0_2"/>
<dbReference type="InParanoid" id="O26803"/>
<dbReference type="BioCyc" id="MetaCyc:MONOMER-14999"/>
<dbReference type="EvolutionaryTrace" id="O26803"/>
<dbReference type="Proteomes" id="UP000005223">
    <property type="component" value="Chromosome"/>
</dbReference>
<dbReference type="GO" id="GO:0005737">
    <property type="term" value="C:cytoplasm"/>
    <property type="evidence" value="ECO:0007669"/>
    <property type="project" value="InterPro"/>
</dbReference>
<dbReference type="GO" id="GO:0004812">
    <property type="term" value="F:aminoacyl-tRNA ligase activity"/>
    <property type="evidence" value="ECO:0007669"/>
    <property type="project" value="InterPro"/>
</dbReference>
<dbReference type="GO" id="GO:0005524">
    <property type="term" value="F:ATP binding"/>
    <property type="evidence" value="ECO:0007669"/>
    <property type="project" value="UniProtKB-KW"/>
</dbReference>
<dbReference type="GO" id="GO:0050567">
    <property type="term" value="F:glutaminyl-tRNA synthase (glutamine-hydrolyzing) activity"/>
    <property type="evidence" value="ECO:0007669"/>
    <property type="project" value="UniProtKB-UniRule"/>
</dbReference>
<dbReference type="GO" id="GO:0070681">
    <property type="term" value="P:glutaminyl-tRNAGln biosynthesis via transamidation"/>
    <property type="evidence" value="ECO:0007669"/>
    <property type="project" value="TreeGrafter"/>
</dbReference>
<dbReference type="GO" id="GO:0006412">
    <property type="term" value="P:translation"/>
    <property type="evidence" value="ECO:0007669"/>
    <property type="project" value="UniProtKB-UniRule"/>
</dbReference>
<dbReference type="FunFam" id="1.10.10.410:FF:000003">
    <property type="entry name" value="Glutamyl-tRNA(Gln) amidotransferase subunit E"/>
    <property type="match status" value="1"/>
</dbReference>
<dbReference type="Gene3D" id="1.10.10.410">
    <property type="match status" value="1"/>
</dbReference>
<dbReference type="Gene3D" id="3.30.1360.30">
    <property type="entry name" value="GAD-like domain"/>
    <property type="match status" value="1"/>
</dbReference>
<dbReference type="Gene3D" id="1.10.150.380">
    <property type="entry name" value="GatB domain, N-terminal subdomain"/>
    <property type="match status" value="1"/>
</dbReference>
<dbReference type="HAMAP" id="MF_00588">
    <property type="entry name" value="GatE"/>
    <property type="match status" value="1"/>
</dbReference>
<dbReference type="InterPro" id="IPR017959">
    <property type="entry name" value="Asn/Gln-tRNA_amidoTrfase_suB/E"/>
</dbReference>
<dbReference type="InterPro" id="IPR006075">
    <property type="entry name" value="Asn/Gln-tRNA_Trfase_suB/E_cat"/>
</dbReference>
<dbReference type="InterPro" id="IPR018027">
    <property type="entry name" value="Asn/Gln_amidotransferase"/>
</dbReference>
<dbReference type="InterPro" id="IPR003789">
    <property type="entry name" value="Asn/Gln_tRNA_amidoTrase-B-like"/>
</dbReference>
<dbReference type="InterPro" id="IPR004115">
    <property type="entry name" value="GAD-like_sf"/>
</dbReference>
<dbReference type="InterPro" id="IPR029351">
    <property type="entry name" value="GAD_dom"/>
</dbReference>
<dbReference type="InterPro" id="IPR042114">
    <property type="entry name" value="GatB_C_1"/>
</dbReference>
<dbReference type="InterPro" id="IPR023168">
    <property type="entry name" value="GatB_Yqey_C_2"/>
</dbReference>
<dbReference type="InterPro" id="IPR004414">
    <property type="entry name" value="GatE"/>
</dbReference>
<dbReference type="InterPro" id="IPR017958">
    <property type="entry name" value="Gln-tRNA_amidoTrfase_suB_CS"/>
</dbReference>
<dbReference type="InterPro" id="IPR014746">
    <property type="entry name" value="Gln_synth/guanido_kin_cat_dom"/>
</dbReference>
<dbReference type="NCBIfam" id="TIGR00134">
    <property type="entry name" value="gatE_arch"/>
    <property type="match status" value="1"/>
</dbReference>
<dbReference type="NCBIfam" id="NF003107">
    <property type="entry name" value="PRK04028.1"/>
    <property type="match status" value="1"/>
</dbReference>
<dbReference type="PANTHER" id="PTHR11659">
    <property type="entry name" value="GLUTAMYL-TRNA GLN AMIDOTRANSFERASE SUBUNIT B MITOCHONDRIAL AND PROKARYOTIC PET112-RELATED"/>
    <property type="match status" value="1"/>
</dbReference>
<dbReference type="PANTHER" id="PTHR11659:SF2">
    <property type="entry name" value="GLUTAMYL-TRNA(GLN) AMIDOTRANSFERASE SUBUNIT E"/>
    <property type="match status" value="1"/>
</dbReference>
<dbReference type="Pfam" id="PF02938">
    <property type="entry name" value="GAD"/>
    <property type="match status" value="1"/>
</dbReference>
<dbReference type="Pfam" id="PF02934">
    <property type="entry name" value="GatB_N"/>
    <property type="match status" value="1"/>
</dbReference>
<dbReference type="Pfam" id="PF02637">
    <property type="entry name" value="GatB_Yqey"/>
    <property type="match status" value="1"/>
</dbReference>
<dbReference type="SMART" id="SM00845">
    <property type="entry name" value="GatB_Yqey"/>
    <property type="match status" value="1"/>
</dbReference>
<dbReference type="SUPFAM" id="SSF55261">
    <property type="entry name" value="GAD domain-like"/>
    <property type="match status" value="1"/>
</dbReference>
<dbReference type="SUPFAM" id="SSF89095">
    <property type="entry name" value="GatB/YqeY motif"/>
    <property type="match status" value="1"/>
</dbReference>
<dbReference type="SUPFAM" id="SSF55931">
    <property type="entry name" value="Glutamine synthetase/guanido kinase"/>
    <property type="match status" value="1"/>
</dbReference>
<dbReference type="PROSITE" id="PS01234">
    <property type="entry name" value="GATB"/>
    <property type="match status" value="1"/>
</dbReference>
<gene>
    <name type="primary">gatE</name>
    <name type="ordered locus">MTH_707</name>
</gene>
<feature type="chain" id="PRO_0000140075" description="Glutamyl-tRNA(Gln) amidotransferase subunit E">
    <location>
        <begin position="1"/>
        <end position="619"/>
    </location>
</feature>
<feature type="helix" evidence="2">
    <location>
        <begin position="3"/>
        <end position="6"/>
    </location>
</feature>
<feature type="strand" evidence="2">
    <location>
        <begin position="9"/>
        <end position="17"/>
    </location>
</feature>
<feature type="strand" evidence="2">
    <location>
        <begin position="24"/>
        <end position="26"/>
    </location>
</feature>
<feature type="strand" evidence="2">
    <location>
        <begin position="28"/>
        <end position="31"/>
    </location>
</feature>
<feature type="strand" evidence="2">
    <location>
        <begin position="38"/>
        <end position="44"/>
    </location>
</feature>
<feature type="turn" evidence="2">
    <location>
        <begin position="60"/>
        <end position="62"/>
    </location>
</feature>
<feature type="helix" evidence="2">
    <location>
        <begin position="64"/>
        <end position="67"/>
    </location>
</feature>
<feature type="strand" evidence="2">
    <location>
        <begin position="68"/>
        <end position="73"/>
    </location>
</feature>
<feature type="turn" evidence="2">
    <location>
        <begin position="75"/>
        <end position="77"/>
    </location>
</feature>
<feature type="turn" evidence="2">
    <location>
        <begin position="80"/>
        <end position="84"/>
    </location>
</feature>
<feature type="helix" evidence="2">
    <location>
        <begin position="93"/>
        <end position="105"/>
    </location>
</feature>
<feature type="strand" evidence="2">
    <location>
        <begin position="112"/>
        <end position="114"/>
    </location>
</feature>
<feature type="strand" evidence="2">
    <location>
        <begin position="117"/>
        <end position="120"/>
    </location>
</feature>
<feature type="strand" evidence="2">
    <location>
        <begin position="124"/>
        <end position="144"/>
    </location>
</feature>
<feature type="strand" evidence="2">
    <location>
        <begin position="147"/>
        <end position="158"/>
    </location>
</feature>
<feature type="strand" evidence="2">
    <location>
        <begin position="162"/>
        <end position="167"/>
    </location>
</feature>
<feature type="strand" evidence="2">
    <location>
        <begin position="170"/>
        <end position="174"/>
    </location>
</feature>
<feature type="strand" evidence="2">
    <location>
        <begin position="181"/>
        <end position="186"/>
    </location>
</feature>
<feature type="helix" evidence="2">
    <location>
        <begin position="194"/>
        <end position="208"/>
    </location>
</feature>
<feature type="strand" evidence="2">
    <location>
        <begin position="221"/>
        <end position="227"/>
    </location>
</feature>
<feature type="strand" evidence="2">
    <location>
        <begin position="234"/>
        <end position="237"/>
    </location>
</feature>
<feature type="helix" evidence="2">
    <location>
        <begin position="242"/>
        <end position="244"/>
    </location>
</feature>
<feature type="helix" evidence="2">
    <location>
        <begin position="245"/>
        <end position="268"/>
    </location>
</feature>
<feature type="strand" evidence="2">
    <location>
        <begin position="273"/>
        <end position="278"/>
    </location>
</feature>
<feature type="helix" evidence="2">
    <location>
        <begin position="282"/>
        <end position="284"/>
    </location>
</feature>
<feature type="helix" evidence="2">
    <location>
        <begin position="290"/>
        <end position="293"/>
    </location>
</feature>
<feature type="strand" evidence="2">
    <location>
        <begin position="295"/>
        <end position="303"/>
    </location>
</feature>
<feature type="turn" evidence="2">
    <location>
        <begin position="307"/>
        <end position="309"/>
    </location>
</feature>
<feature type="strand" evidence="2">
    <location>
        <begin position="310"/>
        <end position="315"/>
    </location>
</feature>
<feature type="helix" evidence="2">
    <location>
        <begin position="320"/>
        <end position="329"/>
    </location>
</feature>
<feature type="turn" evidence="2">
    <location>
        <begin position="339"/>
        <end position="343"/>
    </location>
</feature>
<feature type="helix" evidence="2">
    <location>
        <begin position="349"/>
        <end position="358"/>
    </location>
</feature>
<feature type="strand" evidence="2">
    <location>
        <begin position="363"/>
        <end position="372"/>
    </location>
</feature>
<feature type="helix" evidence="2">
    <location>
        <begin position="374"/>
        <end position="393"/>
    </location>
</feature>
<feature type="strand" evidence="2">
    <location>
        <begin position="398"/>
        <end position="402"/>
    </location>
</feature>
<feature type="strand" evidence="2">
    <location>
        <begin position="404"/>
        <end position="406"/>
    </location>
</feature>
<feature type="strand" evidence="2">
    <location>
        <begin position="408"/>
        <end position="413"/>
    </location>
</feature>
<feature type="strand" evidence="2">
    <location>
        <begin position="420"/>
        <end position="422"/>
    </location>
</feature>
<feature type="helix" evidence="2">
    <location>
        <begin position="433"/>
        <end position="440"/>
    </location>
</feature>
<feature type="helix" evidence="2">
    <location>
        <begin position="447"/>
        <end position="456"/>
    </location>
</feature>
<feature type="helix" evidence="2">
    <location>
        <begin position="462"/>
        <end position="470"/>
    </location>
</feature>
<feature type="turn" evidence="2">
    <location>
        <begin position="474"/>
        <end position="476"/>
    </location>
</feature>
<feature type="helix" evidence="2">
    <location>
        <begin position="488"/>
        <end position="492"/>
    </location>
</feature>
<feature type="turn" evidence="2">
    <location>
        <begin position="493"/>
        <end position="496"/>
    </location>
</feature>
<feature type="helix" evidence="2">
    <location>
        <begin position="497"/>
        <end position="501"/>
    </location>
</feature>
<feature type="turn" evidence="2">
    <location>
        <begin position="511"/>
        <end position="513"/>
    </location>
</feature>
<feature type="helix" evidence="2">
    <location>
        <begin position="514"/>
        <end position="520"/>
    </location>
</feature>
<feature type="strand" evidence="2">
    <location>
        <begin position="523"/>
        <end position="525"/>
    </location>
</feature>
<feature type="helix" evidence="2">
    <location>
        <begin position="528"/>
        <end position="530"/>
    </location>
</feature>
<feature type="helix" evidence="2">
    <location>
        <begin position="531"/>
        <end position="537"/>
    </location>
</feature>
<comment type="function">
    <text>Allows the formation of correctly charged Gln-tRNA(Gln) through the transamidation of misacylated Glu-tRNA(Gln) in organisms which lack glutaminyl-tRNA synthetase. The reaction takes place in the presence of glutamine and ATP through an activated gamma-phospho-Glu-tRNA(Gln). The GatDE system is specific for glutamate and does not act on aspartate.</text>
</comment>
<comment type="catalytic activity">
    <reaction>
        <text>L-glutamyl-tRNA(Gln) + L-glutamine + ATP + H2O = L-glutaminyl-tRNA(Gln) + L-glutamate + ADP + phosphate + H(+)</text>
        <dbReference type="Rhea" id="RHEA:17521"/>
        <dbReference type="Rhea" id="RHEA-COMP:9681"/>
        <dbReference type="Rhea" id="RHEA-COMP:9684"/>
        <dbReference type="ChEBI" id="CHEBI:15377"/>
        <dbReference type="ChEBI" id="CHEBI:15378"/>
        <dbReference type="ChEBI" id="CHEBI:29985"/>
        <dbReference type="ChEBI" id="CHEBI:30616"/>
        <dbReference type="ChEBI" id="CHEBI:43474"/>
        <dbReference type="ChEBI" id="CHEBI:58359"/>
        <dbReference type="ChEBI" id="CHEBI:78520"/>
        <dbReference type="ChEBI" id="CHEBI:78521"/>
        <dbReference type="ChEBI" id="CHEBI:456216"/>
    </reaction>
</comment>
<comment type="subunit">
    <text>Heterodimer of GatD and GatE.</text>
</comment>
<comment type="similarity">
    <text evidence="1">Belongs to the GatB/GatE family. GatE subfamily.</text>
</comment>